<protein>
    <recommendedName>
        <fullName evidence="1">Histidine ammonia-lyase</fullName>
        <shortName evidence="1">Histidase</shortName>
        <ecNumber evidence="1">4.3.1.3</ecNumber>
    </recommendedName>
</protein>
<keyword id="KW-0963">Cytoplasm</keyword>
<keyword id="KW-0369">Histidine metabolism</keyword>
<keyword id="KW-0456">Lyase</keyword>
<sequence>MIEVVLNPGEVSLSDWKAVYRGAPARLNESAGPVIAQSAAAVERILAKGAPVYGINTGFGKLASVRIGDADLETLQRNIVLSHAAGTGAPSPVAVIRLMMALKLASLAQGASGVRPATTDLLEAMIVKGLTPVVPCQGSVGASGDLAPLAHMAATMIGVGEIFVEGQRLPAVQALMEAGLKPLTLGPKEGLALLNGTQFSTANALAALFDAERLFQSALVTGALATEAAKGSDTPFDPRIHTLRRQPGQIETAAALRALMAGSAIRDSHREGDTRVQDPYCLRCQPQVMGAALDILRQAAVTLSTEANGVSDNPLIFPDTDEALSGGNFHAEPVAFAADIIALAVCEIGSIAERRIAMLVDPACSGLPAFLTPKPGLNSGFMIPQVTAAALVSENKQKAYPASVDSIPTSANQEDHVSMAAHGARRLLAMVEAAEAVIGIELLAAVQGCDFHAPLASSPALESVRGLLRAQVPHLSDDRHFHPDMEAANALVRSGAVVAAASSVELPGVEG</sequence>
<accession>B0SYU6</accession>
<reference key="1">
    <citation type="submission" date="2008-01" db="EMBL/GenBank/DDBJ databases">
        <title>Complete sequence of chromosome of Caulobacter sp. K31.</title>
        <authorList>
            <consortium name="US DOE Joint Genome Institute"/>
            <person name="Copeland A."/>
            <person name="Lucas S."/>
            <person name="Lapidus A."/>
            <person name="Barry K."/>
            <person name="Glavina del Rio T."/>
            <person name="Dalin E."/>
            <person name="Tice H."/>
            <person name="Pitluck S."/>
            <person name="Bruce D."/>
            <person name="Goodwin L."/>
            <person name="Thompson L.S."/>
            <person name="Brettin T."/>
            <person name="Detter J.C."/>
            <person name="Han C."/>
            <person name="Schmutz J."/>
            <person name="Larimer F."/>
            <person name="Land M."/>
            <person name="Hauser L."/>
            <person name="Kyrpides N."/>
            <person name="Kim E."/>
            <person name="Stephens C."/>
            <person name="Richardson P."/>
        </authorList>
    </citation>
    <scope>NUCLEOTIDE SEQUENCE [LARGE SCALE GENOMIC DNA]</scope>
    <source>
        <strain>K31</strain>
    </source>
</reference>
<dbReference type="EC" id="4.3.1.3" evidence="1"/>
<dbReference type="EMBL" id="CP000927">
    <property type="protein sequence ID" value="ABZ70427.1"/>
    <property type="molecule type" value="Genomic_DNA"/>
</dbReference>
<dbReference type="SMR" id="B0SYU6"/>
<dbReference type="STRING" id="366602.Caul_1297"/>
<dbReference type="KEGG" id="cak:Caul_1297"/>
<dbReference type="eggNOG" id="COG2986">
    <property type="taxonomic scope" value="Bacteria"/>
</dbReference>
<dbReference type="HOGENOM" id="CLU_014801_4_0_5"/>
<dbReference type="OrthoDB" id="9806955at2"/>
<dbReference type="UniPathway" id="UPA00379">
    <property type="reaction ID" value="UER00549"/>
</dbReference>
<dbReference type="GO" id="GO:0005737">
    <property type="term" value="C:cytoplasm"/>
    <property type="evidence" value="ECO:0007669"/>
    <property type="project" value="UniProtKB-SubCell"/>
</dbReference>
<dbReference type="GO" id="GO:0004397">
    <property type="term" value="F:histidine ammonia-lyase activity"/>
    <property type="evidence" value="ECO:0007669"/>
    <property type="project" value="UniProtKB-UniRule"/>
</dbReference>
<dbReference type="GO" id="GO:0019556">
    <property type="term" value="P:L-histidine catabolic process to glutamate and formamide"/>
    <property type="evidence" value="ECO:0007669"/>
    <property type="project" value="UniProtKB-UniPathway"/>
</dbReference>
<dbReference type="GO" id="GO:0019557">
    <property type="term" value="P:L-histidine catabolic process to glutamate and formate"/>
    <property type="evidence" value="ECO:0007669"/>
    <property type="project" value="UniProtKB-UniPathway"/>
</dbReference>
<dbReference type="CDD" id="cd00332">
    <property type="entry name" value="PAL-HAL"/>
    <property type="match status" value="1"/>
</dbReference>
<dbReference type="FunFam" id="1.10.275.10:FF:000005">
    <property type="entry name" value="Histidine ammonia-lyase"/>
    <property type="match status" value="1"/>
</dbReference>
<dbReference type="FunFam" id="1.20.200.10:FF:000003">
    <property type="entry name" value="Histidine ammonia-lyase"/>
    <property type="match status" value="1"/>
</dbReference>
<dbReference type="Gene3D" id="1.20.200.10">
    <property type="entry name" value="Fumarase/aspartase (Central domain)"/>
    <property type="match status" value="1"/>
</dbReference>
<dbReference type="Gene3D" id="1.10.275.10">
    <property type="entry name" value="Fumarase/aspartase (N-terminal domain)"/>
    <property type="match status" value="1"/>
</dbReference>
<dbReference type="HAMAP" id="MF_00229">
    <property type="entry name" value="His_ammonia_lyase"/>
    <property type="match status" value="1"/>
</dbReference>
<dbReference type="InterPro" id="IPR001106">
    <property type="entry name" value="Aromatic_Lyase"/>
</dbReference>
<dbReference type="InterPro" id="IPR024083">
    <property type="entry name" value="Fumarase/histidase_N"/>
</dbReference>
<dbReference type="InterPro" id="IPR005921">
    <property type="entry name" value="HutH"/>
</dbReference>
<dbReference type="InterPro" id="IPR008948">
    <property type="entry name" value="L-Aspartase-like"/>
</dbReference>
<dbReference type="InterPro" id="IPR022313">
    <property type="entry name" value="Phe/His_NH3-lyase_AS"/>
</dbReference>
<dbReference type="NCBIfam" id="TIGR01225">
    <property type="entry name" value="hutH"/>
    <property type="match status" value="1"/>
</dbReference>
<dbReference type="NCBIfam" id="NF006871">
    <property type="entry name" value="PRK09367.1"/>
    <property type="match status" value="1"/>
</dbReference>
<dbReference type="PANTHER" id="PTHR10362">
    <property type="entry name" value="HISTIDINE AMMONIA-LYASE"/>
    <property type="match status" value="1"/>
</dbReference>
<dbReference type="Pfam" id="PF00221">
    <property type="entry name" value="Lyase_aromatic"/>
    <property type="match status" value="1"/>
</dbReference>
<dbReference type="SUPFAM" id="SSF48557">
    <property type="entry name" value="L-aspartase-like"/>
    <property type="match status" value="1"/>
</dbReference>
<dbReference type="PROSITE" id="PS00488">
    <property type="entry name" value="PAL_HISTIDASE"/>
    <property type="match status" value="1"/>
</dbReference>
<comment type="catalytic activity">
    <reaction evidence="1">
        <text>L-histidine = trans-urocanate + NH4(+)</text>
        <dbReference type="Rhea" id="RHEA:21232"/>
        <dbReference type="ChEBI" id="CHEBI:17771"/>
        <dbReference type="ChEBI" id="CHEBI:28938"/>
        <dbReference type="ChEBI" id="CHEBI:57595"/>
        <dbReference type="EC" id="4.3.1.3"/>
    </reaction>
</comment>
<comment type="pathway">
    <text evidence="1">Amino-acid degradation; L-histidine degradation into L-glutamate; N-formimidoyl-L-glutamate from L-histidine: step 1/3.</text>
</comment>
<comment type="subcellular location">
    <subcellularLocation>
        <location evidence="1">Cytoplasm</location>
    </subcellularLocation>
</comment>
<comment type="PTM">
    <text evidence="1">Contains an active site 4-methylidene-imidazol-5-one (MIO), which is formed autocatalytically by cyclization and dehydration of residues Ala-Ser-Gly.</text>
</comment>
<comment type="similarity">
    <text evidence="1">Belongs to the PAL/histidase family.</text>
</comment>
<name>HUTH_CAUSK</name>
<proteinExistence type="inferred from homology"/>
<evidence type="ECO:0000255" key="1">
    <source>
        <dbReference type="HAMAP-Rule" id="MF_00229"/>
    </source>
</evidence>
<organism>
    <name type="scientific">Caulobacter sp. (strain K31)</name>
    <dbReference type="NCBI Taxonomy" id="366602"/>
    <lineage>
        <taxon>Bacteria</taxon>
        <taxon>Pseudomonadati</taxon>
        <taxon>Pseudomonadota</taxon>
        <taxon>Alphaproteobacteria</taxon>
        <taxon>Caulobacterales</taxon>
        <taxon>Caulobacteraceae</taxon>
        <taxon>Caulobacter</taxon>
    </lineage>
</organism>
<gene>
    <name evidence="1" type="primary">hutH</name>
    <name type="ordered locus">Caul_1297</name>
</gene>
<feature type="chain" id="PRO_1000078224" description="Histidine ammonia-lyase">
    <location>
        <begin position="1"/>
        <end position="511"/>
    </location>
</feature>
<feature type="modified residue" description="2,3-didehydroalanine (Ser)" evidence="1">
    <location>
        <position position="143"/>
    </location>
</feature>
<feature type="cross-link" description="5-imidazolinone (Ala-Gly)" evidence="1">
    <location>
        <begin position="142"/>
        <end position="144"/>
    </location>
</feature>